<evidence type="ECO:0000255" key="1">
    <source>
        <dbReference type="HAMAP-Rule" id="MF_00652"/>
    </source>
</evidence>
<feature type="chain" id="PRO_1000061643" description="UPF0246 protein SSA_1395">
    <location>
        <begin position="1"/>
        <end position="242"/>
    </location>
</feature>
<keyword id="KW-1185">Reference proteome</keyword>
<gene>
    <name type="ordered locus">SSA_1395</name>
</gene>
<reference key="1">
    <citation type="journal article" date="2007" name="J. Bacteriol.">
        <title>Genome of the opportunistic pathogen Streptococcus sanguinis.</title>
        <authorList>
            <person name="Xu P."/>
            <person name="Alves J.M."/>
            <person name="Kitten T."/>
            <person name="Brown A."/>
            <person name="Chen Z."/>
            <person name="Ozaki L.S."/>
            <person name="Manque P."/>
            <person name="Ge X."/>
            <person name="Serrano M.G."/>
            <person name="Puiu D."/>
            <person name="Hendricks S."/>
            <person name="Wang Y."/>
            <person name="Chaplin M.D."/>
            <person name="Akan D."/>
            <person name="Paik S."/>
            <person name="Peterson D.L."/>
            <person name="Macrina F.L."/>
            <person name="Buck G.A."/>
        </authorList>
    </citation>
    <scope>NUCLEOTIDE SEQUENCE [LARGE SCALE GENOMIC DNA]</scope>
    <source>
        <strain>SK36</strain>
    </source>
</reference>
<organism>
    <name type="scientific">Streptococcus sanguinis (strain SK36)</name>
    <dbReference type="NCBI Taxonomy" id="388919"/>
    <lineage>
        <taxon>Bacteria</taxon>
        <taxon>Bacillati</taxon>
        <taxon>Bacillota</taxon>
        <taxon>Bacilli</taxon>
        <taxon>Lactobacillales</taxon>
        <taxon>Streptococcaceae</taxon>
        <taxon>Streptococcus</taxon>
    </lineage>
</organism>
<accession>A3CNN8</accession>
<proteinExistence type="inferred from homology"/>
<name>Y1395_STRSV</name>
<comment type="similarity">
    <text evidence="1">Belongs to the UPF0246 family.</text>
</comment>
<sequence length="242" mass="27457">MKILIPTAKELNLTAPSAIPNPPLAQTQAVLDELATMSVAGLASFYKISPERAEIELQAIQALREGTAQHAPALYLFDGLMYRHIKRQDYTKEESQYIEKYLAITSALYGVIPALEPIAPHRLDFMMPLKLDGKSLKAFWKEAYDQALAEDEVIFSLLSSEFETVFSKKIRQRMIGFKFLEDRGDKLKVHSTISKKARGEFLTALITNQVTEVEQMKKLNFAGFTYRPDLSSEQEMVYVKEV</sequence>
<protein>
    <recommendedName>
        <fullName evidence="1">UPF0246 protein SSA_1395</fullName>
    </recommendedName>
</protein>
<dbReference type="EMBL" id="CP000387">
    <property type="protein sequence ID" value="ABN44793.1"/>
    <property type="molecule type" value="Genomic_DNA"/>
</dbReference>
<dbReference type="RefSeq" id="WP_011837110.1">
    <property type="nucleotide sequence ID" value="NC_009009.1"/>
</dbReference>
<dbReference type="RefSeq" id="YP_001035343.1">
    <property type="nucleotide sequence ID" value="NC_009009.1"/>
</dbReference>
<dbReference type="SMR" id="A3CNN8"/>
<dbReference type="STRING" id="388919.SSA_1395"/>
<dbReference type="KEGG" id="ssa:SSA_1395"/>
<dbReference type="PATRIC" id="fig|388919.9.peg.1325"/>
<dbReference type="eggNOG" id="COG3022">
    <property type="taxonomic scope" value="Bacteria"/>
</dbReference>
<dbReference type="HOGENOM" id="CLU_061989_2_1_9"/>
<dbReference type="OrthoDB" id="9777133at2"/>
<dbReference type="Proteomes" id="UP000002148">
    <property type="component" value="Chromosome"/>
</dbReference>
<dbReference type="GO" id="GO:0005829">
    <property type="term" value="C:cytosol"/>
    <property type="evidence" value="ECO:0007669"/>
    <property type="project" value="TreeGrafter"/>
</dbReference>
<dbReference type="GO" id="GO:0033194">
    <property type="term" value="P:response to hydroperoxide"/>
    <property type="evidence" value="ECO:0007669"/>
    <property type="project" value="TreeGrafter"/>
</dbReference>
<dbReference type="HAMAP" id="MF_00652">
    <property type="entry name" value="UPF0246"/>
    <property type="match status" value="1"/>
</dbReference>
<dbReference type="InterPro" id="IPR005583">
    <property type="entry name" value="YaaA"/>
</dbReference>
<dbReference type="NCBIfam" id="NF002543">
    <property type="entry name" value="PRK02101.1-4"/>
    <property type="match status" value="1"/>
</dbReference>
<dbReference type="PANTHER" id="PTHR30283:SF4">
    <property type="entry name" value="PEROXIDE STRESS RESISTANCE PROTEIN YAAA"/>
    <property type="match status" value="1"/>
</dbReference>
<dbReference type="PANTHER" id="PTHR30283">
    <property type="entry name" value="PEROXIDE STRESS RESPONSE PROTEIN YAAA"/>
    <property type="match status" value="1"/>
</dbReference>
<dbReference type="Pfam" id="PF03883">
    <property type="entry name" value="H2O2_YaaD"/>
    <property type="match status" value="1"/>
</dbReference>